<comment type="function">
    <text evidence="1">Catalyzes the hydrolysis of UDP-3-O-myristoyl-N-acetylglucosamine to form UDP-3-O-myristoylglucosamine and acetate, the committed step in lipid A biosynthesis.</text>
</comment>
<comment type="catalytic activity">
    <reaction evidence="1">
        <text>a UDP-3-O-[(3R)-3-hydroxyacyl]-N-acetyl-alpha-D-glucosamine + H2O = a UDP-3-O-[(3R)-3-hydroxyacyl]-alpha-D-glucosamine + acetate</text>
        <dbReference type="Rhea" id="RHEA:67816"/>
        <dbReference type="ChEBI" id="CHEBI:15377"/>
        <dbReference type="ChEBI" id="CHEBI:30089"/>
        <dbReference type="ChEBI" id="CHEBI:137740"/>
        <dbReference type="ChEBI" id="CHEBI:173225"/>
        <dbReference type="EC" id="3.5.1.108"/>
    </reaction>
</comment>
<comment type="cofactor">
    <cofactor evidence="1">
        <name>Zn(2+)</name>
        <dbReference type="ChEBI" id="CHEBI:29105"/>
    </cofactor>
</comment>
<comment type="pathway">
    <text evidence="1">Glycolipid biosynthesis; lipid IV(A) biosynthesis; lipid IV(A) from (3R)-3-hydroxytetradecanoyl-[acyl-carrier-protein] and UDP-N-acetyl-alpha-D-glucosamine: step 2/6.</text>
</comment>
<comment type="similarity">
    <text evidence="1">Belongs to the LpxC family.</text>
</comment>
<keyword id="KW-0378">Hydrolase</keyword>
<keyword id="KW-0441">Lipid A biosynthesis</keyword>
<keyword id="KW-0444">Lipid biosynthesis</keyword>
<keyword id="KW-0443">Lipid metabolism</keyword>
<keyword id="KW-0479">Metal-binding</keyword>
<keyword id="KW-1185">Reference proteome</keyword>
<keyword id="KW-0862">Zinc</keyword>
<organism>
    <name type="scientific">Chlamydia trachomatis serovar D (strain ATCC VR-885 / DSM 19411 / UW-3/Cx)</name>
    <dbReference type="NCBI Taxonomy" id="272561"/>
    <lineage>
        <taxon>Bacteria</taxon>
        <taxon>Pseudomonadati</taxon>
        <taxon>Chlamydiota</taxon>
        <taxon>Chlamydiia</taxon>
        <taxon>Chlamydiales</taxon>
        <taxon>Chlamydiaceae</taxon>
        <taxon>Chlamydia/Chlamydophila group</taxon>
        <taxon>Chlamydia</taxon>
    </lineage>
</organism>
<sequence length="286" mass="31279">MLGRAQRTLKRKVCYSGVGVHFGKAAMLTLEPAEENTGVVFSHHAASEQYIPARLANVCGTGRSTTLSLDGSVISTVEHLLASLYSFGVDNVRIYCSEDEIPIGDGSAQVFMDLIDQAGIQEQEQTVQIARLAHPVYYQYQDTILAAFPSDEFKISYTLHYSHNSTIGTQYRSLVISEESFRKEIAPCRTFALYSELCFLMEKGLIGGGCVGNAVLFKDDGVISLGKLRFPDEPVRHKILDLIGDLSLVGTPFLAHVIAVGSGHSSNIALGNRILEALQHEQELVK</sequence>
<protein>
    <recommendedName>
        <fullName evidence="1">UDP-3-O-acyl-N-acetylglucosamine deacetylase</fullName>
        <shortName evidence="1">UDP-3-O-acyl-GlcNAc deacetylase</shortName>
        <ecNumber evidence="1">3.5.1.108</ecNumber>
    </recommendedName>
    <alternativeName>
        <fullName evidence="1">UDP-3-O-[R-3-hydroxymyristoyl]-N-acetylglucosamine deacetylase</fullName>
    </alternativeName>
</protein>
<feature type="chain" id="PRO_0000191927" description="UDP-3-O-acyl-N-acetylglucosamine deacetylase">
    <location>
        <begin position="1"/>
        <end position="286"/>
    </location>
</feature>
<feature type="active site" description="Proton donor" evidence="1">
    <location>
        <position position="264"/>
    </location>
</feature>
<feature type="binding site" evidence="1">
    <location>
        <position position="79"/>
    </location>
    <ligand>
        <name>Zn(2+)</name>
        <dbReference type="ChEBI" id="CHEBI:29105"/>
    </ligand>
</feature>
<feature type="binding site" evidence="1">
    <location>
        <position position="237"/>
    </location>
    <ligand>
        <name>Zn(2+)</name>
        <dbReference type="ChEBI" id="CHEBI:29105"/>
    </ligand>
</feature>
<feature type="binding site" evidence="1">
    <location>
        <position position="241"/>
    </location>
    <ligand>
        <name>Zn(2+)</name>
        <dbReference type="ChEBI" id="CHEBI:29105"/>
    </ligand>
</feature>
<dbReference type="EC" id="3.5.1.108" evidence="1"/>
<dbReference type="EMBL" id="AE001273">
    <property type="protein sequence ID" value="AAC68135.1"/>
    <property type="molecule type" value="Genomic_DNA"/>
</dbReference>
<dbReference type="PIR" id="D71502">
    <property type="entry name" value="D71502"/>
</dbReference>
<dbReference type="RefSeq" id="NP_220048.1">
    <property type="nucleotide sequence ID" value="NC_000117.1"/>
</dbReference>
<dbReference type="RefSeq" id="WP_009871897.1">
    <property type="nucleotide sequence ID" value="NC_000117.1"/>
</dbReference>
<dbReference type="SMR" id="O84538"/>
<dbReference type="STRING" id="272561.CT_533"/>
<dbReference type="EnsemblBacteria" id="AAC68135">
    <property type="protein sequence ID" value="AAC68135"/>
    <property type="gene ID" value="CT_533"/>
</dbReference>
<dbReference type="GeneID" id="884309"/>
<dbReference type="KEGG" id="ctr:CT_533"/>
<dbReference type="PATRIC" id="fig|272561.5.peg.578"/>
<dbReference type="HOGENOM" id="CLU_046528_1_0_0"/>
<dbReference type="InParanoid" id="O84538"/>
<dbReference type="OrthoDB" id="9772788at2"/>
<dbReference type="UniPathway" id="UPA00359">
    <property type="reaction ID" value="UER00478"/>
</dbReference>
<dbReference type="Proteomes" id="UP000000431">
    <property type="component" value="Chromosome"/>
</dbReference>
<dbReference type="GO" id="GO:0016020">
    <property type="term" value="C:membrane"/>
    <property type="evidence" value="ECO:0007669"/>
    <property type="project" value="GOC"/>
</dbReference>
<dbReference type="GO" id="GO:0046872">
    <property type="term" value="F:metal ion binding"/>
    <property type="evidence" value="ECO:0007669"/>
    <property type="project" value="UniProtKB-KW"/>
</dbReference>
<dbReference type="GO" id="GO:0103117">
    <property type="term" value="F:UDP-3-O-acyl-N-acetylglucosamine deacetylase activity"/>
    <property type="evidence" value="ECO:0007669"/>
    <property type="project" value="UniProtKB-UniRule"/>
</dbReference>
<dbReference type="GO" id="GO:0009245">
    <property type="term" value="P:lipid A biosynthetic process"/>
    <property type="evidence" value="ECO:0007669"/>
    <property type="project" value="UniProtKB-UniRule"/>
</dbReference>
<dbReference type="Gene3D" id="3.30.230.20">
    <property type="entry name" value="lpxc deacetylase, domain 1"/>
    <property type="match status" value="1"/>
</dbReference>
<dbReference type="Gene3D" id="3.30.1700.10">
    <property type="entry name" value="lpxc deacetylase, domain 2"/>
    <property type="match status" value="1"/>
</dbReference>
<dbReference type="HAMAP" id="MF_00388">
    <property type="entry name" value="LpxC"/>
    <property type="match status" value="1"/>
</dbReference>
<dbReference type="InterPro" id="IPR020568">
    <property type="entry name" value="Ribosomal_Su5_D2-typ_SF"/>
</dbReference>
<dbReference type="InterPro" id="IPR004463">
    <property type="entry name" value="UDP-acyl_GlcNac_deAcase"/>
</dbReference>
<dbReference type="InterPro" id="IPR011334">
    <property type="entry name" value="UDP-acyl_GlcNac_deAcase_C"/>
</dbReference>
<dbReference type="InterPro" id="IPR015870">
    <property type="entry name" value="UDP-acyl_N-AcGlcN_deAcase_N"/>
</dbReference>
<dbReference type="NCBIfam" id="TIGR00325">
    <property type="entry name" value="lpxC"/>
    <property type="match status" value="1"/>
</dbReference>
<dbReference type="PANTHER" id="PTHR33694">
    <property type="entry name" value="UDP-3-O-ACYL-N-ACETYLGLUCOSAMINE DEACETYLASE 1, MITOCHONDRIAL-RELATED"/>
    <property type="match status" value="1"/>
</dbReference>
<dbReference type="PANTHER" id="PTHR33694:SF1">
    <property type="entry name" value="UDP-3-O-ACYL-N-ACETYLGLUCOSAMINE DEACETYLASE 1, MITOCHONDRIAL-RELATED"/>
    <property type="match status" value="1"/>
</dbReference>
<dbReference type="Pfam" id="PF03331">
    <property type="entry name" value="LpxC"/>
    <property type="match status" value="1"/>
</dbReference>
<dbReference type="SUPFAM" id="SSF54211">
    <property type="entry name" value="Ribosomal protein S5 domain 2-like"/>
    <property type="match status" value="2"/>
</dbReference>
<name>LPXC_CHLTR</name>
<gene>
    <name evidence="1" type="primary">lpxC</name>
    <name type="ordered locus">CT_533</name>
</gene>
<evidence type="ECO:0000255" key="1">
    <source>
        <dbReference type="HAMAP-Rule" id="MF_00388"/>
    </source>
</evidence>
<accession>O84538</accession>
<reference key="1">
    <citation type="journal article" date="1998" name="Science">
        <title>Genome sequence of an obligate intracellular pathogen of humans: Chlamydia trachomatis.</title>
        <authorList>
            <person name="Stephens R.S."/>
            <person name="Kalman S."/>
            <person name="Lammel C.J."/>
            <person name="Fan J."/>
            <person name="Marathe R."/>
            <person name="Aravind L."/>
            <person name="Mitchell W.P."/>
            <person name="Olinger L."/>
            <person name="Tatusov R.L."/>
            <person name="Zhao Q."/>
            <person name="Koonin E.V."/>
            <person name="Davis R.W."/>
        </authorList>
    </citation>
    <scope>NUCLEOTIDE SEQUENCE [LARGE SCALE GENOMIC DNA]</scope>
    <source>
        <strain>ATCC VR-885 / DSM 19411 / UW-3/Cx</strain>
    </source>
</reference>
<proteinExistence type="inferred from homology"/>